<gene>
    <name evidence="1" type="primary">rplC</name>
    <name type="ordered locus">LVIS_1690</name>
</gene>
<name>RL3_LEVBA</name>
<sequence length="216" mass="23510">MTTKGILGKKVGMTQVFTDAGELIPVTVVEATPNVVLQVKTMENDGYNAIQLGYQDKREVLSNKPEQGHVAKANTTPKRFIREFTDVELGDYKVADEVKVDTFQAGDIVDVTGVTKGHGYQGNIHKDGQSRGPMAHGSRYHRRPGSLGAIINRVFPGMKLPGRMGNKQVTIQNLVIVKADVENNVLLIKGNVPGANKSLVTVKSAVRPPRPKQSEK</sequence>
<protein>
    <recommendedName>
        <fullName evidence="1">Large ribosomal subunit protein uL3</fullName>
    </recommendedName>
    <alternativeName>
        <fullName evidence="3">50S ribosomal protein L3</fullName>
    </alternativeName>
</protein>
<dbReference type="EMBL" id="CP000416">
    <property type="protein sequence ID" value="ABJ64765.1"/>
    <property type="molecule type" value="Genomic_DNA"/>
</dbReference>
<dbReference type="RefSeq" id="WP_011668499.1">
    <property type="nucleotide sequence ID" value="NC_008497.1"/>
</dbReference>
<dbReference type="SMR" id="Q03PV7"/>
<dbReference type="STRING" id="387344.LVIS_1690"/>
<dbReference type="GeneID" id="56993551"/>
<dbReference type="KEGG" id="lbr:LVIS_1690"/>
<dbReference type="eggNOG" id="COG0087">
    <property type="taxonomic scope" value="Bacteria"/>
</dbReference>
<dbReference type="HOGENOM" id="CLU_044142_4_1_9"/>
<dbReference type="Proteomes" id="UP000001652">
    <property type="component" value="Chromosome"/>
</dbReference>
<dbReference type="GO" id="GO:0022625">
    <property type="term" value="C:cytosolic large ribosomal subunit"/>
    <property type="evidence" value="ECO:0007669"/>
    <property type="project" value="TreeGrafter"/>
</dbReference>
<dbReference type="GO" id="GO:0019843">
    <property type="term" value="F:rRNA binding"/>
    <property type="evidence" value="ECO:0007669"/>
    <property type="project" value="UniProtKB-UniRule"/>
</dbReference>
<dbReference type="GO" id="GO:0003735">
    <property type="term" value="F:structural constituent of ribosome"/>
    <property type="evidence" value="ECO:0007669"/>
    <property type="project" value="InterPro"/>
</dbReference>
<dbReference type="GO" id="GO:0006412">
    <property type="term" value="P:translation"/>
    <property type="evidence" value="ECO:0007669"/>
    <property type="project" value="UniProtKB-UniRule"/>
</dbReference>
<dbReference type="FunFam" id="2.40.30.10:FF:000004">
    <property type="entry name" value="50S ribosomal protein L3"/>
    <property type="match status" value="1"/>
</dbReference>
<dbReference type="FunFam" id="3.30.160.810:FF:000002">
    <property type="entry name" value="50S ribosomal protein L3"/>
    <property type="match status" value="1"/>
</dbReference>
<dbReference type="Gene3D" id="3.30.160.810">
    <property type="match status" value="1"/>
</dbReference>
<dbReference type="Gene3D" id="2.40.30.10">
    <property type="entry name" value="Translation factors"/>
    <property type="match status" value="1"/>
</dbReference>
<dbReference type="HAMAP" id="MF_01325_B">
    <property type="entry name" value="Ribosomal_uL3_B"/>
    <property type="match status" value="1"/>
</dbReference>
<dbReference type="InterPro" id="IPR000597">
    <property type="entry name" value="Ribosomal_uL3"/>
</dbReference>
<dbReference type="InterPro" id="IPR019927">
    <property type="entry name" value="Ribosomal_uL3_bac/org-type"/>
</dbReference>
<dbReference type="InterPro" id="IPR009000">
    <property type="entry name" value="Transl_B-barrel_sf"/>
</dbReference>
<dbReference type="NCBIfam" id="TIGR03625">
    <property type="entry name" value="L3_bact"/>
    <property type="match status" value="1"/>
</dbReference>
<dbReference type="PANTHER" id="PTHR11229">
    <property type="entry name" value="50S RIBOSOMAL PROTEIN L3"/>
    <property type="match status" value="1"/>
</dbReference>
<dbReference type="PANTHER" id="PTHR11229:SF16">
    <property type="entry name" value="LARGE RIBOSOMAL SUBUNIT PROTEIN UL3C"/>
    <property type="match status" value="1"/>
</dbReference>
<dbReference type="Pfam" id="PF00297">
    <property type="entry name" value="Ribosomal_L3"/>
    <property type="match status" value="1"/>
</dbReference>
<dbReference type="SUPFAM" id="SSF50447">
    <property type="entry name" value="Translation proteins"/>
    <property type="match status" value="1"/>
</dbReference>
<accession>Q03PV7</accession>
<comment type="function">
    <text evidence="1">One of the primary rRNA binding proteins, it binds directly near the 3'-end of the 23S rRNA, where it nucleates assembly of the 50S subunit.</text>
</comment>
<comment type="subunit">
    <text evidence="1">Part of the 50S ribosomal subunit. Forms a cluster with proteins L14 and L19.</text>
</comment>
<comment type="similarity">
    <text evidence="1">Belongs to the universal ribosomal protein uL3 family.</text>
</comment>
<reference key="1">
    <citation type="journal article" date="2006" name="Proc. Natl. Acad. Sci. U.S.A.">
        <title>Comparative genomics of the lactic acid bacteria.</title>
        <authorList>
            <person name="Makarova K.S."/>
            <person name="Slesarev A."/>
            <person name="Wolf Y.I."/>
            <person name="Sorokin A."/>
            <person name="Mirkin B."/>
            <person name="Koonin E.V."/>
            <person name="Pavlov A."/>
            <person name="Pavlova N."/>
            <person name="Karamychev V."/>
            <person name="Polouchine N."/>
            <person name="Shakhova V."/>
            <person name="Grigoriev I."/>
            <person name="Lou Y."/>
            <person name="Rohksar D."/>
            <person name="Lucas S."/>
            <person name="Huang K."/>
            <person name="Goodstein D.M."/>
            <person name="Hawkins T."/>
            <person name="Plengvidhya V."/>
            <person name="Welker D."/>
            <person name="Hughes J."/>
            <person name="Goh Y."/>
            <person name="Benson A."/>
            <person name="Baldwin K."/>
            <person name="Lee J.-H."/>
            <person name="Diaz-Muniz I."/>
            <person name="Dosti B."/>
            <person name="Smeianov V."/>
            <person name="Wechter W."/>
            <person name="Barabote R."/>
            <person name="Lorca G."/>
            <person name="Altermann E."/>
            <person name="Barrangou R."/>
            <person name="Ganesan B."/>
            <person name="Xie Y."/>
            <person name="Rawsthorne H."/>
            <person name="Tamir D."/>
            <person name="Parker C."/>
            <person name="Breidt F."/>
            <person name="Broadbent J.R."/>
            <person name="Hutkins R."/>
            <person name="O'Sullivan D."/>
            <person name="Steele J."/>
            <person name="Unlu G."/>
            <person name="Saier M.H. Jr."/>
            <person name="Klaenhammer T."/>
            <person name="Richardson P."/>
            <person name="Kozyavkin S."/>
            <person name="Weimer B.C."/>
            <person name="Mills D.A."/>
        </authorList>
    </citation>
    <scope>NUCLEOTIDE SEQUENCE [LARGE SCALE GENOMIC DNA]</scope>
    <source>
        <strain>ATCC 367 / BCRC 12310 / CIP 105137 / JCM 1170 / LMG 11437 / NCIMB 947 / NCTC 947</strain>
    </source>
</reference>
<organism>
    <name type="scientific">Levilactobacillus brevis (strain ATCC 367 / BCRC 12310 / CIP 105137 / JCM 1170 / LMG 11437 / NCIMB 947 / NCTC 947)</name>
    <name type="common">Lactobacillus brevis</name>
    <dbReference type="NCBI Taxonomy" id="387344"/>
    <lineage>
        <taxon>Bacteria</taxon>
        <taxon>Bacillati</taxon>
        <taxon>Bacillota</taxon>
        <taxon>Bacilli</taxon>
        <taxon>Lactobacillales</taxon>
        <taxon>Lactobacillaceae</taxon>
        <taxon>Levilactobacillus</taxon>
    </lineage>
</organism>
<evidence type="ECO:0000255" key="1">
    <source>
        <dbReference type="HAMAP-Rule" id="MF_01325"/>
    </source>
</evidence>
<evidence type="ECO:0000256" key="2">
    <source>
        <dbReference type="SAM" id="MobiDB-lite"/>
    </source>
</evidence>
<evidence type="ECO:0000305" key="3"/>
<proteinExistence type="inferred from homology"/>
<feature type="chain" id="PRO_1000052062" description="Large ribosomal subunit protein uL3">
    <location>
        <begin position="1"/>
        <end position="216"/>
    </location>
</feature>
<feature type="region of interest" description="Disordered" evidence="2">
    <location>
        <begin position="119"/>
        <end position="143"/>
    </location>
</feature>
<keyword id="KW-1185">Reference proteome</keyword>
<keyword id="KW-0687">Ribonucleoprotein</keyword>
<keyword id="KW-0689">Ribosomal protein</keyword>
<keyword id="KW-0694">RNA-binding</keyword>
<keyword id="KW-0699">rRNA-binding</keyword>